<evidence type="ECO:0000255" key="1">
    <source>
        <dbReference type="HAMAP-Rule" id="MF_00321"/>
    </source>
</evidence>
<comment type="function">
    <text evidence="1">Necessary for normal cell division and for the maintenance of normal septation.</text>
</comment>
<comment type="cofactor">
    <cofactor evidence="1">
        <name>Mg(2+)</name>
        <dbReference type="ChEBI" id="CHEBI:18420"/>
    </cofactor>
</comment>
<comment type="similarity">
    <text evidence="1">Belongs to the TRAFAC class TrmE-Era-EngA-EngB-Septin-like GTPase superfamily. EngB GTPase family.</text>
</comment>
<sequence length="211" mass="23522">MQLKNPILGLCQQATFMLSAAKVDQCPDDEGFEVAFAGRSNAGKSSALNTLTHASLARTSKTPGRTQLLNFFGLDEDRRLVDLPGYGYAKVPIPLKLHWQRHLEAYLGSRESLKGLILMMDIRHPMTDFDLLMLDWAIASNMPMHILLTKADKLTYGAAKNTLLKVQTEIRKGWGDAVSIQLFSAPKRMGLEEAYTVLADWMELEDKAPAE</sequence>
<accession>Q48PV6</accession>
<reference key="1">
    <citation type="journal article" date="2005" name="J. Bacteriol.">
        <title>Whole-genome sequence analysis of Pseudomonas syringae pv. phaseolicola 1448A reveals divergence among pathovars in genes involved in virulence and transposition.</title>
        <authorList>
            <person name="Joardar V."/>
            <person name="Lindeberg M."/>
            <person name="Jackson R.W."/>
            <person name="Selengut J."/>
            <person name="Dodson R."/>
            <person name="Brinkac L.M."/>
            <person name="Daugherty S.C."/>
            <person name="DeBoy R.T."/>
            <person name="Durkin A.S."/>
            <person name="Gwinn Giglio M."/>
            <person name="Madupu R."/>
            <person name="Nelson W.C."/>
            <person name="Rosovitz M.J."/>
            <person name="Sullivan S.A."/>
            <person name="Crabtree J."/>
            <person name="Creasy T."/>
            <person name="Davidsen T.M."/>
            <person name="Haft D.H."/>
            <person name="Zafar N."/>
            <person name="Zhou L."/>
            <person name="Halpin R."/>
            <person name="Holley T."/>
            <person name="Khouri H.M."/>
            <person name="Feldblyum T.V."/>
            <person name="White O."/>
            <person name="Fraser C.M."/>
            <person name="Chatterjee A.K."/>
            <person name="Cartinhour S."/>
            <person name="Schneider D."/>
            <person name="Mansfield J.W."/>
            <person name="Collmer A."/>
            <person name="Buell R."/>
        </authorList>
    </citation>
    <scope>NUCLEOTIDE SEQUENCE [LARGE SCALE GENOMIC DNA]</scope>
    <source>
        <strain>1448A / Race 6</strain>
    </source>
</reference>
<keyword id="KW-0131">Cell cycle</keyword>
<keyword id="KW-0132">Cell division</keyword>
<keyword id="KW-0342">GTP-binding</keyword>
<keyword id="KW-0460">Magnesium</keyword>
<keyword id="KW-0479">Metal-binding</keyword>
<keyword id="KW-0547">Nucleotide-binding</keyword>
<keyword id="KW-0717">Septation</keyword>
<organism>
    <name type="scientific">Pseudomonas savastanoi pv. phaseolicola (strain 1448A / Race 6)</name>
    <name type="common">Pseudomonas syringae pv. phaseolicola (strain 1448A / Race 6)</name>
    <dbReference type="NCBI Taxonomy" id="264730"/>
    <lineage>
        <taxon>Bacteria</taxon>
        <taxon>Pseudomonadati</taxon>
        <taxon>Pseudomonadota</taxon>
        <taxon>Gammaproteobacteria</taxon>
        <taxon>Pseudomonadales</taxon>
        <taxon>Pseudomonadaceae</taxon>
        <taxon>Pseudomonas</taxon>
    </lineage>
</organism>
<dbReference type="EMBL" id="CP000058">
    <property type="protein sequence ID" value="AAZ36510.1"/>
    <property type="molecule type" value="Genomic_DNA"/>
</dbReference>
<dbReference type="SMR" id="Q48PV6"/>
<dbReference type="KEGG" id="psp:PSPPH_0258"/>
<dbReference type="eggNOG" id="COG0218">
    <property type="taxonomic scope" value="Bacteria"/>
</dbReference>
<dbReference type="HOGENOM" id="CLU_033732_1_0_6"/>
<dbReference type="Proteomes" id="UP000000551">
    <property type="component" value="Chromosome"/>
</dbReference>
<dbReference type="GO" id="GO:0005829">
    <property type="term" value="C:cytosol"/>
    <property type="evidence" value="ECO:0007669"/>
    <property type="project" value="TreeGrafter"/>
</dbReference>
<dbReference type="GO" id="GO:0005525">
    <property type="term" value="F:GTP binding"/>
    <property type="evidence" value="ECO:0007669"/>
    <property type="project" value="UniProtKB-UniRule"/>
</dbReference>
<dbReference type="GO" id="GO:0046872">
    <property type="term" value="F:metal ion binding"/>
    <property type="evidence" value="ECO:0007669"/>
    <property type="project" value="UniProtKB-KW"/>
</dbReference>
<dbReference type="GO" id="GO:0000917">
    <property type="term" value="P:division septum assembly"/>
    <property type="evidence" value="ECO:0007669"/>
    <property type="project" value="UniProtKB-KW"/>
</dbReference>
<dbReference type="CDD" id="cd01876">
    <property type="entry name" value="YihA_EngB"/>
    <property type="match status" value="1"/>
</dbReference>
<dbReference type="FunFam" id="3.40.50.300:FF:000098">
    <property type="entry name" value="Probable GTP-binding protein EngB"/>
    <property type="match status" value="1"/>
</dbReference>
<dbReference type="Gene3D" id="3.40.50.300">
    <property type="entry name" value="P-loop containing nucleotide triphosphate hydrolases"/>
    <property type="match status" value="1"/>
</dbReference>
<dbReference type="HAMAP" id="MF_00321">
    <property type="entry name" value="GTPase_EngB"/>
    <property type="match status" value="1"/>
</dbReference>
<dbReference type="InterPro" id="IPR030393">
    <property type="entry name" value="G_ENGB_dom"/>
</dbReference>
<dbReference type="InterPro" id="IPR006073">
    <property type="entry name" value="GTP-bd"/>
</dbReference>
<dbReference type="InterPro" id="IPR019987">
    <property type="entry name" value="GTP-bd_ribosome_bio_YsxC"/>
</dbReference>
<dbReference type="InterPro" id="IPR027417">
    <property type="entry name" value="P-loop_NTPase"/>
</dbReference>
<dbReference type="NCBIfam" id="TIGR03598">
    <property type="entry name" value="GTPase_YsxC"/>
    <property type="match status" value="1"/>
</dbReference>
<dbReference type="PANTHER" id="PTHR11649:SF13">
    <property type="entry name" value="ENGB-TYPE G DOMAIN-CONTAINING PROTEIN"/>
    <property type="match status" value="1"/>
</dbReference>
<dbReference type="PANTHER" id="PTHR11649">
    <property type="entry name" value="MSS1/TRME-RELATED GTP-BINDING PROTEIN"/>
    <property type="match status" value="1"/>
</dbReference>
<dbReference type="Pfam" id="PF01926">
    <property type="entry name" value="MMR_HSR1"/>
    <property type="match status" value="1"/>
</dbReference>
<dbReference type="SUPFAM" id="SSF52540">
    <property type="entry name" value="P-loop containing nucleoside triphosphate hydrolases"/>
    <property type="match status" value="1"/>
</dbReference>
<dbReference type="PROSITE" id="PS51706">
    <property type="entry name" value="G_ENGB"/>
    <property type="match status" value="1"/>
</dbReference>
<gene>
    <name evidence="1" type="primary">engB</name>
    <name type="ordered locus">PSPPH_0258</name>
</gene>
<feature type="chain" id="PRO_0000266921" description="Probable GTP-binding protein EngB">
    <location>
        <begin position="1"/>
        <end position="211"/>
    </location>
</feature>
<feature type="domain" description="EngB-type G" evidence="1">
    <location>
        <begin position="30"/>
        <end position="204"/>
    </location>
</feature>
<feature type="binding site" evidence="1">
    <location>
        <begin position="38"/>
        <end position="45"/>
    </location>
    <ligand>
        <name>GTP</name>
        <dbReference type="ChEBI" id="CHEBI:37565"/>
    </ligand>
</feature>
<feature type="binding site" evidence="1">
    <location>
        <position position="45"/>
    </location>
    <ligand>
        <name>Mg(2+)</name>
        <dbReference type="ChEBI" id="CHEBI:18420"/>
    </ligand>
</feature>
<feature type="binding site" evidence="1">
    <location>
        <begin position="64"/>
        <end position="68"/>
    </location>
    <ligand>
        <name>GTP</name>
        <dbReference type="ChEBI" id="CHEBI:37565"/>
    </ligand>
</feature>
<feature type="binding site" evidence="1">
    <location>
        <position position="66"/>
    </location>
    <ligand>
        <name>Mg(2+)</name>
        <dbReference type="ChEBI" id="CHEBI:18420"/>
    </ligand>
</feature>
<feature type="binding site" evidence="1">
    <location>
        <begin position="82"/>
        <end position="85"/>
    </location>
    <ligand>
        <name>GTP</name>
        <dbReference type="ChEBI" id="CHEBI:37565"/>
    </ligand>
</feature>
<feature type="binding site" evidence="1">
    <location>
        <begin position="149"/>
        <end position="152"/>
    </location>
    <ligand>
        <name>GTP</name>
        <dbReference type="ChEBI" id="CHEBI:37565"/>
    </ligand>
</feature>
<feature type="binding site" evidence="1">
    <location>
        <begin position="182"/>
        <end position="185"/>
    </location>
    <ligand>
        <name>GTP</name>
        <dbReference type="ChEBI" id="CHEBI:37565"/>
    </ligand>
</feature>
<name>ENGB_PSE14</name>
<proteinExistence type="inferred from homology"/>
<protein>
    <recommendedName>
        <fullName evidence="1">Probable GTP-binding protein EngB</fullName>
    </recommendedName>
</protein>